<sequence length="261" mass="28048">MEGGLGRAVCLLTGASRGFGRTLAPLLASLLSPGSVLVLSARNDEALRQLEAELGAERSGLRVVRVPADLGAEAGLQQLLGALRELPRPKGLQRLLLINNAGSLGDVSKGFVDLSDSTQVNNYWALNLTSMLCLTSSVLKAFPDSPGLNRTVVNISSLCALQPFKGWALYCAGKAARDMLFQVLALEEPNVRVLNYAPGPLDTDMQQLARETSVDPDMRKGLQELKAKGKLVDCKVSAQKLLSLLEKDEFKSGAHVDFYDK</sequence>
<evidence type="ECO:0000250" key="1"/>
<evidence type="ECO:0000250" key="2">
    <source>
        <dbReference type="UniProtKB" id="P18297"/>
    </source>
</evidence>
<evidence type="ECO:0000269" key="3">
    <source>
    </source>
</evidence>
<evidence type="ECO:0000269" key="4">
    <source>
    </source>
</evidence>
<evidence type="ECO:0000269" key="5">
    <source>
    </source>
</evidence>
<evidence type="ECO:0000269" key="6">
    <source>
    </source>
</evidence>
<evidence type="ECO:0000269" key="7">
    <source>
    </source>
</evidence>
<evidence type="ECO:0000269" key="8">
    <source ref="14"/>
</evidence>
<evidence type="ECO:0000305" key="9"/>
<evidence type="ECO:0000305" key="10">
    <source>
    </source>
</evidence>
<evidence type="ECO:0007744" key="11">
    <source>
    </source>
</evidence>
<evidence type="ECO:0007829" key="12">
    <source>
        <dbReference type="PDB" id="4J7X"/>
    </source>
</evidence>
<evidence type="ECO:0007829" key="13">
    <source>
        <dbReference type="PDB" id="6I6V"/>
    </source>
</evidence>
<dbReference type="EC" id="1.1.1.153" evidence="3 4"/>
<dbReference type="EMBL" id="M76231">
    <property type="protein sequence ID" value="AAA60314.1"/>
    <property type="molecule type" value="mRNA"/>
</dbReference>
<dbReference type="EMBL" id="AK291856">
    <property type="protein sequence ID" value="BAF84545.1"/>
    <property type="molecule type" value="mRNA"/>
</dbReference>
<dbReference type="EMBL" id="AK222942">
    <property type="protein sequence ID" value="BAD96662.1"/>
    <property type="molecule type" value="mRNA"/>
</dbReference>
<dbReference type="EMBL" id="AC092630">
    <property type="protein sequence ID" value="AAY15035.1"/>
    <property type="molecule type" value="Genomic_DNA"/>
</dbReference>
<dbReference type="EMBL" id="CH471053">
    <property type="protein sequence ID" value="EAW99757.1"/>
    <property type="molecule type" value="Genomic_DNA"/>
</dbReference>
<dbReference type="EMBL" id="CH471053">
    <property type="protein sequence ID" value="EAW99758.1"/>
    <property type="molecule type" value="Genomic_DNA"/>
</dbReference>
<dbReference type="EMBL" id="BC017310">
    <property type="protein sequence ID" value="AAH17310.1"/>
    <property type="molecule type" value="mRNA"/>
</dbReference>
<dbReference type="EMBL" id="AB017547">
    <property type="protein sequence ID" value="BAA34534.1"/>
    <property type="molecule type" value="Genomic_DNA"/>
</dbReference>
<dbReference type="CCDS" id="CCDS1920.1"/>
<dbReference type="PIR" id="JQ1176">
    <property type="entry name" value="JQ1176"/>
</dbReference>
<dbReference type="RefSeq" id="NP_003115.1">
    <property type="nucleotide sequence ID" value="NM_003124.5"/>
</dbReference>
<dbReference type="PDB" id="1Z6Z">
    <property type="method" value="X-ray"/>
    <property type="resolution" value="2.50 A"/>
    <property type="chains" value="A/B/C/D/E/F=5-261"/>
</dbReference>
<dbReference type="PDB" id="4HWK">
    <property type="method" value="X-ray"/>
    <property type="resolution" value="2.40 A"/>
    <property type="chains" value="A/B/C/D=1-261"/>
</dbReference>
<dbReference type="PDB" id="4J7U">
    <property type="method" value="X-ray"/>
    <property type="resolution" value="2.44 A"/>
    <property type="chains" value="A/B/C/D=1-261"/>
</dbReference>
<dbReference type="PDB" id="4J7X">
    <property type="method" value="X-ray"/>
    <property type="resolution" value="2.60 A"/>
    <property type="chains" value="A/B/F/J=1-261"/>
</dbReference>
<dbReference type="PDB" id="4XWY">
    <property type="method" value="X-ray"/>
    <property type="resolution" value="2.35 A"/>
    <property type="chains" value="A/B/C/D=1-261"/>
</dbReference>
<dbReference type="PDB" id="4Z3K">
    <property type="method" value="X-ray"/>
    <property type="resolution" value="2.35 A"/>
    <property type="chains" value="A/B/C/D=1-261"/>
</dbReference>
<dbReference type="PDB" id="6I6C">
    <property type="method" value="X-ray"/>
    <property type="resolution" value="1.72 A"/>
    <property type="chains" value="A/B=1-261"/>
</dbReference>
<dbReference type="PDB" id="6I6F">
    <property type="method" value="X-ray"/>
    <property type="resolution" value="1.94 A"/>
    <property type="chains" value="A/B=1-261"/>
</dbReference>
<dbReference type="PDB" id="6I6P">
    <property type="method" value="X-ray"/>
    <property type="resolution" value="1.62 A"/>
    <property type="chains" value="A/B=1-261"/>
</dbReference>
<dbReference type="PDB" id="6I6T">
    <property type="method" value="X-ray"/>
    <property type="resolution" value="1.79 A"/>
    <property type="chains" value="A/B=1-261"/>
</dbReference>
<dbReference type="PDB" id="6I6V">
    <property type="method" value="X-ray"/>
    <property type="resolution" value="1.43 A"/>
    <property type="chains" value="A/B=1-261"/>
</dbReference>
<dbReference type="PDB" id="6I79">
    <property type="method" value="X-ray"/>
    <property type="resolution" value="1.63 A"/>
    <property type="chains" value="A/B=1-261"/>
</dbReference>
<dbReference type="PDB" id="6USN">
    <property type="method" value="X-ray"/>
    <property type="resolution" value="2.77 A"/>
    <property type="chains" value="A/B/C/D=1-261"/>
</dbReference>
<dbReference type="PDB" id="7DSF">
    <property type="method" value="X-ray"/>
    <property type="resolution" value="1.80 A"/>
    <property type="chains" value="A/B=1-261"/>
</dbReference>
<dbReference type="PDBsum" id="1Z6Z"/>
<dbReference type="PDBsum" id="4HWK"/>
<dbReference type="PDBsum" id="4J7U"/>
<dbReference type="PDBsum" id="4J7X"/>
<dbReference type="PDBsum" id="4XWY"/>
<dbReference type="PDBsum" id="4Z3K"/>
<dbReference type="PDBsum" id="6I6C"/>
<dbReference type="PDBsum" id="6I6F"/>
<dbReference type="PDBsum" id="6I6P"/>
<dbReference type="PDBsum" id="6I6T"/>
<dbReference type="PDBsum" id="6I6V"/>
<dbReference type="PDBsum" id="6I79"/>
<dbReference type="PDBsum" id="6USN"/>
<dbReference type="PDBsum" id="7DSF"/>
<dbReference type="SMR" id="P35270"/>
<dbReference type="BioGRID" id="112575">
    <property type="interactions" value="111"/>
</dbReference>
<dbReference type="FunCoup" id="P35270">
    <property type="interactions" value="878"/>
</dbReference>
<dbReference type="IntAct" id="P35270">
    <property type="interactions" value="8"/>
</dbReference>
<dbReference type="MINT" id="P35270"/>
<dbReference type="STRING" id="9606.ENSP00000234454"/>
<dbReference type="BindingDB" id="P35270"/>
<dbReference type="ChEMBL" id="CHEMBL3988583"/>
<dbReference type="DrugBank" id="DB03886">
    <property type="generic name" value="Biopterin"/>
</dbReference>
<dbReference type="DrugBank" id="DB04275">
    <property type="generic name" value="N-acetylserotonin"/>
</dbReference>
<dbReference type="DrugBank" id="DB03461">
    <property type="generic name" value="Nicotinamide adenine dinucleotide phosphate"/>
</dbReference>
<dbReference type="DrugBank" id="DB02637">
    <property type="generic name" value="Oxaloacetate Ion"/>
</dbReference>
<dbReference type="GuidetoPHARMACOLOGY" id="3020"/>
<dbReference type="GlyGen" id="P35270">
    <property type="glycosylation" value="1 site, 1 O-linked glycan (1 site)"/>
</dbReference>
<dbReference type="iPTMnet" id="P35270"/>
<dbReference type="PhosphoSitePlus" id="P35270"/>
<dbReference type="SwissPalm" id="P35270"/>
<dbReference type="BioMuta" id="SPR"/>
<dbReference type="DMDM" id="464801"/>
<dbReference type="jPOST" id="P35270"/>
<dbReference type="MassIVE" id="P35270"/>
<dbReference type="PaxDb" id="9606-ENSP00000234454"/>
<dbReference type="PeptideAtlas" id="P35270"/>
<dbReference type="ProteomicsDB" id="55020"/>
<dbReference type="Pumba" id="P35270"/>
<dbReference type="Antibodypedia" id="31290">
    <property type="antibodies" value="378 antibodies from 30 providers"/>
</dbReference>
<dbReference type="DNASU" id="6697"/>
<dbReference type="Ensembl" id="ENST00000234454.6">
    <property type="protein sequence ID" value="ENSP00000234454.5"/>
    <property type="gene ID" value="ENSG00000116096.7"/>
</dbReference>
<dbReference type="GeneID" id="6697"/>
<dbReference type="KEGG" id="hsa:6697"/>
<dbReference type="MANE-Select" id="ENST00000234454.6">
    <property type="protein sequence ID" value="ENSP00000234454.5"/>
    <property type="RefSeq nucleotide sequence ID" value="NM_003124.5"/>
    <property type="RefSeq protein sequence ID" value="NP_003115.1"/>
</dbReference>
<dbReference type="UCSC" id="uc002sik.3">
    <property type="organism name" value="human"/>
</dbReference>
<dbReference type="AGR" id="HGNC:11257"/>
<dbReference type="CTD" id="6697"/>
<dbReference type="DisGeNET" id="6697"/>
<dbReference type="GeneCards" id="SPR"/>
<dbReference type="GeneReviews" id="SPR"/>
<dbReference type="HGNC" id="HGNC:11257">
    <property type="gene designation" value="SPR"/>
</dbReference>
<dbReference type="HPA" id="ENSG00000116096">
    <property type="expression patterns" value="Low tissue specificity"/>
</dbReference>
<dbReference type="MalaCards" id="SPR"/>
<dbReference type="MIM" id="182125">
    <property type="type" value="gene"/>
</dbReference>
<dbReference type="MIM" id="612716">
    <property type="type" value="phenotype"/>
</dbReference>
<dbReference type="neXtProt" id="NX_P35270"/>
<dbReference type="OpenTargets" id="ENSG00000116096"/>
<dbReference type="Orphanet" id="70594">
    <property type="disease" value="Dopa-responsive dystonia due to sepiapterin reductase deficiency"/>
</dbReference>
<dbReference type="PharmGKB" id="PA36087"/>
<dbReference type="VEuPathDB" id="HostDB:ENSG00000116096"/>
<dbReference type="eggNOG" id="KOG1204">
    <property type="taxonomic scope" value="Eukaryota"/>
</dbReference>
<dbReference type="GeneTree" id="ENSGT00440000033609"/>
<dbReference type="HOGENOM" id="CLU_010194_2_11_1"/>
<dbReference type="InParanoid" id="P35270"/>
<dbReference type="OMA" id="FKGWTLY"/>
<dbReference type="OrthoDB" id="153074at2759"/>
<dbReference type="PAN-GO" id="P35270">
    <property type="GO annotations" value="2 GO annotations based on evolutionary models"/>
</dbReference>
<dbReference type="PhylomeDB" id="P35270"/>
<dbReference type="TreeFam" id="TF326358"/>
<dbReference type="BioCyc" id="MetaCyc:HS03979-MONOMER"/>
<dbReference type="BRENDA" id="1.1.1.153">
    <property type="organism ID" value="2681"/>
</dbReference>
<dbReference type="PathwayCommons" id="P35270"/>
<dbReference type="Reactome" id="R-HSA-1474151">
    <property type="pathway name" value="Tetrahydrobiopterin (BH4) synthesis, recycling, salvage and regulation"/>
</dbReference>
<dbReference type="Reactome" id="R-HSA-203615">
    <property type="pathway name" value="eNOS activation"/>
</dbReference>
<dbReference type="SABIO-RK" id="P35270"/>
<dbReference type="SignaLink" id="P35270"/>
<dbReference type="SIGNOR" id="P35270"/>
<dbReference type="BioGRID-ORCS" id="6697">
    <property type="hits" value="15 hits in 1161 CRISPR screens"/>
</dbReference>
<dbReference type="ChiTaRS" id="SPR">
    <property type="organism name" value="human"/>
</dbReference>
<dbReference type="EvolutionaryTrace" id="P35270"/>
<dbReference type="GeneWiki" id="Sepiapterin_reductase"/>
<dbReference type="GenomeRNAi" id="6697"/>
<dbReference type="Pharos" id="P35270">
    <property type="development level" value="Tchem"/>
</dbReference>
<dbReference type="PRO" id="PR:P35270"/>
<dbReference type="Proteomes" id="UP000005640">
    <property type="component" value="Chromosome 2"/>
</dbReference>
<dbReference type="RNAct" id="P35270">
    <property type="molecule type" value="protein"/>
</dbReference>
<dbReference type="Bgee" id="ENSG00000116096">
    <property type="expression patterns" value="Expressed in mucosa of transverse colon and 175 other cell types or tissues"/>
</dbReference>
<dbReference type="GO" id="GO:0005829">
    <property type="term" value="C:cytosol"/>
    <property type="evidence" value="ECO:0000314"/>
    <property type="project" value="HPA"/>
</dbReference>
<dbReference type="GO" id="GO:0070062">
    <property type="term" value="C:extracellular exosome"/>
    <property type="evidence" value="ECO:0007005"/>
    <property type="project" value="UniProtKB"/>
</dbReference>
<dbReference type="GO" id="GO:0005739">
    <property type="term" value="C:mitochondrion"/>
    <property type="evidence" value="ECO:0006056"/>
    <property type="project" value="FlyBase"/>
</dbReference>
<dbReference type="GO" id="GO:0005654">
    <property type="term" value="C:nucleoplasm"/>
    <property type="evidence" value="ECO:0000314"/>
    <property type="project" value="HPA"/>
</dbReference>
<dbReference type="GO" id="GO:0004033">
    <property type="term" value="F:aldo-keto reductase (NADPH) activity"/>
    <property type="evidence" value="ECO:0000304"/>
    <property type="project" value="UniProtKB"/>
</dbReference>
<dbReference type="GO" id="GO:0050661">
    <property type="term" value="F:NADP binding"/>
    <property type="evidence" value="ECO:0000304"/>
    <property type="project" value="UniProtKB"/>
</dbReference>
<dbReference type="GO" id="GO:0004757">
    <property type="term" value="F:sepiapterin reductase (NADP+) activity"/>
    <property type="evidence" value="ECO:0000250"/>
    <property type="project" value="UniProtKB"/>
</dbReference>
<dbReference type="GO" id="GO:0006809">
    <property type="term" value="P:nitric oxide biosynthetic process"/>
    <property type="evidence" value="ECO:0000314"/>
    <property type="project" value="UniProtKB"/>
</dbReference>
<dbReference type="GO" id="GO:0006729">
    <property type="term" value="P:tetrahydrobiopterin biosynthetic process"/>
    <property type="evidence" value="ECO:0000318"/>
    <property type="project" value="GO_Central"/>
</dbReference>
<dbReference type="CDD" id="cd05367">
    <property type="entry name" value="SPR-like_SDR_c"/>
    <property type="match status" value="1"/>
</dbReference>
<dbReference type="FunFam" id="3.40.50.720:FF:000259">
    <property type="entry name" value="Sepiapterin reductase"/>
    <property type="match status" value="1"/>
</dbReference>
<dbReference type="Gene3D" id="3.40.50.720">
    <property type="entry name" value="NAD(P)-binding Rossmann-like Domain"/>
    <property type="match status" value="1"/>
</dbReference>
<dbReference type="InterPro" id="IPR051721">
    <property type="entry name" value="Biopterin_syn/organic_redct"/>
</dbReference>
<dbReference type="InterPro" id="IPR036291">
    <property type="entry name" value="NAD(P)-bd_dom_sf"/>
</dbReference>
<dbReference type="InterPro" id="IPR002347">
    <property type="entry name" value="SDR_fam"/>
</dbReference>
<dbReference type="InterPro" id="IPR006393">
    <property type="entry name" value="Sepiapterin_red"/>
</dbReference>
<dbReference type="NCBIfam" id="TIGR01500">
    <property type="entry name" value="sepiapter_red"/>
    <property type="match status" value="1"/>
</dbReference>
<dbReference type="PANTHER" id="PTHR44085">
    <property type="entry name" value="SEPIAPTERIN REDUCTASE"/>
    <property type="match status" value="1"/>
</dbReference>
<dbReference type="PANTHER" id="PTHR44085:SF2">
    <property type="entry name" value="SEPIAPTERIN REDUCTASE"/>
    <property type="match status" value="1"/>
</dbReference>
<dbReference type="Pfam" id="PF00106">
    <property type="entry name" value="adh_short"/>
    <property type="match status" value="1"/>
</dbReference>
<dbReference type="PRINTS" id="PR00081">
    <property type="entry name" value="GDHRDH"/>
</dbReference>
<dbReference type="SUPFAM" id="SSF51735">
    <property type="entry name" value="NAD(P)-binding Rossmann-fold domains"/>
    <property type="match status" value="1"/>
</dbReference>
<reference key="1">
    <citation type="journal article" date="1991" name="Biochem. Biophys. Res. Commun.">
        <title>Cloning and sequencing of cDNA encoding human sepiapterin reductase -- an enzyme involved in tetrahydrobiopterin biosynthesis.</title>
        <authorList>
            <person name="Ichinose H."/>
            <person name="Katoh S."/>
            <person name="Sueoka T."/>
            <person name="Titani K."/>
            <person name="Fujita K."/>
            <person name="Nagatsu T."/>
        </authorList>
    </citation>
    <scope>NUCLEOTIDE SEQUENCE [MRNA]</scope>
    <source>
        <tissue>Liver</tissue>
    </source>
</reference>
<reference key="2">
    <citation type="journal article" date="1993" name="Exp. Cell Res.">
        <title>Detection of a novel sepiapterin reductase mRNA: assay of mRNA in various cells and tissues of various species.</title>
        <authorList>
            <person name="Maier J."/>
            <person name="Schott K."/>
            <person name="Werner T."/>
            <person name="Bacher A."/>
            <person name="Ziegler I."/>
        </authorList>
    </citation>
    <scope>NUCLEOTIDE SEQUENCE [MRNA]</scope>
</reference>
<reference key="3">
    <citation type="journal article" date="2004" name="Nat. Genet.">
        <title>Complete sequencing and characterization of 21,243 full-length human cDNAs.</title>
        <authorList>
            <person name="Ota T."/>
            <person name="Suzuki Y."/>
            <person name="Nishikawa T."/>
            <person name="Otsuki T."/>
            <person name="Sugiyama T."/>
            <person name="Irie R."/>
            <person name="Wakamatsu A."/>
            <person name="Hayashi K."/>
            <person name="Sato H."/>
            <person name="Nagai K."/>
            <person name="Kimura K."/>
            <person name="Makita H."/>
            <person name="Sekine M."/>
            <person name="Obayashi M."/>
            <person name="Nishi T."/>
            <person name="Shibahara T."/>
            <person name="Tanaka T."/>
            <person name="Ishii S."/>
            <person name="Yamamoto J."/>
            <person name="Saito K."/>
            <person name="Kawai Y."/>
            <person name="Isono Y."/>
            <person name="Nakamura Y."/>
            <person name="Nagahari K."/>
            <person name="Murakami K."/>
            <person name="Yasuda T."/>
            <person name="Iwayanagi T."/>
            <person name="Wagatsuma M."/>
            <person name="Shiratori A."/>
            <person name="Sudo H."/>
            <person name="Hosoiri T."/>
            <person name="Kaku Y."/>
            <person name="Kodaira H."/>
            <person name="Kondo H."/>
            <person name="Sugawara M."/>
            <person name="Takahashi M."/>
            <person name="Kanda K."/>
            <person name="Yokoi T."/>
            <person name="Furuya T."/>
            <person name="Kikkawa E."/>
            <person name="Omura Y."/>
            <person name="Abe K."/>
            <person name="Kamihara K."/>
            <person name="Katsuta N."/>
            <person name="Sato K."/>
            <person name="Tanikawa M."/>
            <person name="Yamazaki M."/>
            <person name="Ninomiya K."/>
            <person name="Ishibashi T."/>
            <person name="Yamashita H."/>
            <person name="Murakawa K."/>
            <person name="Fujimori K."/>
            <person name="Tanai H."/>
            <person name="Kimata M."/>
            <person name="Watanabe M."/>
            <person name="Hiraoka S."/>
            <person name="Chiba Y."/>
            <person name="Ishida S."/>
            <person name="Ono Y."/>
            <person name="Takiguchi S."/>
            <person name="Watanabe S."/>
            <person name="Yosida M."/>
            <person name="Hotuta T."/>
            <person name="Kusano J."/>
            <person name="Kanehori K."/>
            <person name="Takahashi-Fujii A."/>
            <person name="Hara H."/>
            <person name="Tanase T.-O."/>
            <person name="Nomura Y."/>
            <person name="Togiya S."/>
            <person name="Komai F."/>
            <person name="Hara R."/>
            <person name="Takeuchi K."/>
            <person name="Arita M."/>
            <person name="Imose N."/>
            <person name="Musashino K."/>
            <person name="Yuuki H."/>
            <person name="Oshima A."/>
            <person name="Sasaki N."/>
            <person name="Aotsuka S."/>
            <person name="Yoshikawa Y."/>
            <person name="Matsunawa H."/>
            <person name="Ichihara T."/>
            <person name="Shiohata N."/>
            <person name="Sano S."/>
            <person name="Moriya S."/>
            <person name="Momiyama H."/>
            <person name="Satoh N."/>
            <person name="Takami S."/>
            <person name="Terashima Y."/>
            <person name="Suzuki O."/>
            <person name="Nakagawa S."/>
            <person name="Senoh A."/>
            <person name="Mizoguchi H."/>
            <person name="Goto Y."/>
            <person name="Shimizu F."/>
            <person name="Wakebe H."/>
            <person name="Hishigaki H."/>
            <person name="Watanabe T."/>
            <person name="Sugiyama A."/>
            <person name="Takemoto M."/>
            <person name="Kawakami B."/>
            <person name="Yamazaki M."/>
            <person name="Watanabe K."/>
            <person name="Kumagai A."/>
            <person name="Itakura S."/>
            <person name="Fukuzumi Y."/>
            <person name="Fujimori Y."/>
            <person name="Komiyama M."/>
            <person name="Tashiro H."/>
            <person name="Tanigami A."/>
            <person name="Fujiwara T."/>
            <person name="Ono T."/>
            <person name="Yamada K."/>
            <person name="Fujii Y."/>
            <person name="Ozaki K."/>
            <person name="Hirao M."/>
            <person name="Ohmori Y."/>
            <person name="Kawabata A."/>
            <person name="Hikiji T."/>
            <person name="Kobatake N."/>
            <person name="Inagaki H."/>
            <person name="Ikema Y."/>
            <person name="Okamoto S."/>
            <person name="Okitani R."/>
            <person name="Kawakami T."/>
            <person name="Noguchi S."/>
            <person name="Itoh T."/>
            <person name="Shigeta K."/>
            <person name="Senba T."/>
            <person name="Matsumura K."/>
            <person name="Nakajima Y."/>
            <person name="Mizuno T."/>
            <person name="Morinaga M."/>
            <person name="Sasaki M."/>
            <person name="Togashi T."/>
            <person name="Oyama M."/>
            <person name="Hata H."/>
            <person name="Watanabe M."/>
            <person name="Komatsu T."/>
            <person name="Mizushima-Sugano J."/>
            <person name="Satoh T."/>
            <person name="Shirai Y."/>
            <person name="Takahashi Y."/>
            <person name="Nakagawa K."/>
            <person name="Okumura K."/>
            <person name="Nagase T."/>
            <person name="Nomura N."/>
            <person name="Kikuchi H."/>
            <person name="Masuho Y."/>
            <person name="Yamashita R."/>
            <person name="Nakai K."/>
            <person name="Yada T."/>
            <person name="Nakamura Y."/>
            <person name="Ohara O."/>
            <person name="Isogai T."/>
            <person name="Sugano S."/>
        </authorList>
    </citation>
    <scope>NUCLEOTIDE SEQUENCE [LARGE SCALE MRNA]</scope>
    <source>
        <tissue>Salivary gland</tissue>
    </source>
</reference>
<reference key="4">
    <citation type="submission" date="2005-04" db="EMBL/GenBank/DDBJ databases">
        <authorList>
            <person name="Suzuki Y."/>
            <person name="Sugano S."/>
            <person name="Totoki Y."/>
            <person name="Toyoda A."/>
            <person name="Takeda T."/>
            <person name="Sakaki Y."/>
            <person name="Tanaka A."/>
            <person name="Yokoyama S."/>
        </authorList>
    </citation>
    <scope>NUCLEOTIDE SEQUENCE [LARGE SCALE MRNA]</scope>
    <source>
        <tissue>Kidney</tissue>
    </source>
</reference>
<reference key="5">
    <citation type="journal article" date="2005" name="Nature">
        <title>Generation and annotation of the DNA sequences of human chromosomes 2 and 4.</title>
        <authorList>
            <person name="Hillier L.W."/>
            <person name="Graves T.A."/>
            <person name="Fulton R.S."/>
            <person name="Fulton L.A."/>
            <person name="Pepin K.H."/>
            <person name="Minx P."/>
            <person name="Wagner-McPherson C."/>
            <person name="Layman D."/>
            <person name="Wylie K."/>
            <person name="Sekhon M."/>
            <person name="Becker M.C."/>
            <person name="Fewell G.A."/>
            <person name="Delehaunty K.D."/>
            <person name="Miner T.L."/>
            <person name="Nash W.E."/>
            <person name="Kremitzki C."/>
            <person name="Oddy L."/>
            <person name="Du H."/>
            <person name="Sun H."/>
            <person name="Bradshaw-Cordum H."/>
            <person name="Ali J."/>
            <person name="Carter J."/>
            <person name="Cordes M."/>
            <person name="Harris A."/>
            <person name="Isak A."/>
            <person name="van Brunt A."/>
            <person name="Nguyen C."/>
            <person name="Du F."/>
            <person name="Courtney L."/>
            <person name="Kalicki J."/>
            <person name="Ozersky P."/>
            <person name="Abbott S."/>
            <person name="Armstrong J."/>
            <person name="Belter E.A."/>
            <person name="Caruso L."/>
            <person name="Cedroni M."/>
            <person name="Cotton M."/>
            <person name="Davidson T."/>
            <person name="Desai A."/>
            <person name="Elliott G."/>
            <person name="Erb T."/>
            <person name="Fronick C."/>
            <person name="Gaige T."/>
            <person name="Haakenson W."/>
            <person name="Haglund K."/>
            <person name="Holmes A."/>
            <person name="Harkins R."/>
            <person name="Kim K."/>
            <person name="Kruchowski S.S."/>
            <person name="Strong C.M."/>
            <person name="Grewal N."/>
            <person name="Goyea E."/>
            <person name="Hou S."/>
            <person name="Levy A."/>
            <person name="Martinka S."/>
            <person name="Mead K."/>
            <person name="McLellan M.D."/>
            <person name="Meyer R."/>
            <person name="Randall-Maher J."/>
            <person name="Tomlinson C."/>
            <person name="Dauphin-Kohlberg S."/>
            <person name="Kozlowicz-Reilly A."/>
            <person name="Shah N."/>
            <person name="Swearengen-Shahid S."/>
            <person name="Snider J."/>
            <person name="Strong J.T."/>
            <person name="Thompson J."/>
            <person name="Yoakum M."/>
            <person name="Leonard S."/>
            <person name="Pearman C."/>
            <person name="Trani L."/>
            <person name="Radionenko M."/>
            <person name="Waligorski J.E."/>
            <person name="Wang C."/>
            <person name="Rock S.M."/>
            <person name="Tin-Wollam A.-M."/>
            <person name="Maupin R."/>
            <person name="Latreille P."/>
            <person name="Wendl M.C."/>
            <person name="Yang S.-P."/>
            <person name="Pohl C."/>
            <person name="Wallis J.W."/>
            <person name="Spieth J."/>
            <person name="Bieri T.A."/>
            <person name="Berkowicz N."/>
            <person name="Nelson J.O."/>
            <person name="Osborne J."/>
            <person name="Ding L."/>
            <person name="Meyer R."/>
            <person name="Sabo A."/>
            <person name="Shotland Y."/>
            <person name="Sinha P."/>
            <person name="Wohldmann P.E."/>
            <person name="Cook L.L."/>
            <person name="Hickenbotham M.T."/>
            <person name="Eldred J."/>
            <person name="Williams D."/>
            <person name="Jones T.A."/>
            <person name="She X."/>
            <person name="Ciccarelli F.D."/>
            <person name="Izaurralde E."/>
            <person name="Taylor J."/>
            <person name="Schmutz J."/>
            <person name="Myers R.M."/>
            <person name="Cox D.R."/>
            <person name="Huang X."/>
            <person name="McPherson J.D."/>
            <person name="Mardis E.R."/>
            <person name="Clifton S.W."/>
            <person name="Warren W.C."/>
            <person name="Chinwalla A.T."/>
            <person name="Eddy S.R."/>
            <person name="Marra M.A."/>
            <person name="Ovcharenko I."/>
            <person name="Furey T.S."/>
            <person name="Miller W."/>
            <person name="Eichler E.E."/>
            <person name="Bork P."/>
            <person name="Suyama M."/>
            <person name="Torrents D."/>
            <person name="Waterston R.H."/>
            <person name="Wilson R.K."/>
        </authorList>
    </citation>
    <scope>NUCLEOTIDE SEQUENCE [LARGE SCALE GENOMIC DNA]</scope>
</reference>
<reference key="6">
    <citation type="submission" date="2005-09" db="EMBL/GenBank/DDBJ databases">
        <authorList>
            <person name="Mural R.J."/>
            <person name="Istrail S."/>
            <person name="Sutton G.G."/>
            <person name="Florea L."/>
            <person name="Halpern A.L."/>
            <person name="Mobarry C.M."/>
            <person name="Lippert R."/>
            <person name="Walenz B."/>
            <person name="Shatkay H."/>
            <person name="Dew I."/>
            <person name="Miller J.R."/>
            <person name="Flanigan M.J."/>
            <person name="Edwards N.J."/>
            <person name="Bolanos R."/>
            <person name="Fasulo D."/>
            <person name="Halldorsson B.V."/>
            <person name="Hannenhalli S."/>
            <person name="Turner R."/>
            <person name="Yooseph S."/>
            <person name="Lu F."/>
            <person name="Nusskern D.R."/>
            <person name="Shue B.C."/>
            <person name="Zheng X.H."/>
            <person name="Zhong F."/>
            <person name="Delcher A.L."/>
            <person name="Huson D.H."/>
            <person name="Kravitz S.A."/>
            <person name="Mouchard L."/>
            <person name="Reinert K."/>
            <person name="Remington K.A."/>
            <person name="Clark A.G."/>
            <person name="Waterman M.S."/>
            <person name="Eichler E.E."/>
            <person name="Adams M.D."/>
            <person name="Hunkapiller M.W."/>
            <person name="Myers E.W."/>
            <person name="Venter J.C."/>
        </authorList>
    </citation>
    <scope>NUCLEOTIDE SEQUENCE [LARGE SCALE GENOMIC DNA]</scope>
</reference>
<reference key="7">
    <citation type="journal article" date="2004" name="Genome Res.">
        <title>The status, quality, and expansion of the NIH full-length cDNA project: the Mammalian Gene Collection (MGC).</title>
        <authorList>
            <consortium name="The MGC Project Team"/>
        </authorList>
    </citation>
    <scope>NUCLEOTIDE SEQUENCE [LARGE SCALE MRNA]</scope>
    <source>
        <tissue>Pancreas</tissue>
    </source>
</reference>
<reference key="8">
    <citation type="journal article" date="1998" name="Biochem. Biophys. Res. Commun.">
        <title>Genomic organization and chromosomal localization of the human sepiapterin reductase gene.</title>
        <authorList>
            <person name="Ohye T."/>
            <person name="Hori T.A."/>
            <person name="Katoh S."/>
            <person name="Nagatsu T."/>
            <person name="Ichinose H."/>
        </authorList>
    </citation>
    <scope>NUCLEOTIDE SEQUENCE [GENOMIC DNA]</scope>
</reference>
<reference key="9">
    <citation type="journal article" date="1999" name="Biochim. Biophys. Acta">
        <title>Functionally important residues tyrosine-171 and serine-158 in sepiapterin reductase.</title>
        <authorList>
            <person name="Fujimoto K."/>
            <person name="Ichinose H."/>
            <person name="Nagatsu T."/>
            <person name="Nonaka T."/>
            <person name="Mitsui Y."/>
            <person name="Katoh S."/>
        </authorList>
    </citation>
    <scope>CATALYTIC ACTIVITY</scope>
    <scope>BIOPHYSICOCHEMICAL PROPERTIES</scope>
</reference>
<reference key="10">
    <citation type="journal article" date="2002" name="Biochim. Biophys. Acta">
        <title>Mutational analysis of sites in sepiapterin reductase phosphorylated by Ca2+/calmodulin-dependent protein kinase II.</title>
        <authorList>
            <person name="Fujimoto K."/>
            <person name="Takahashi S.Y."/>
            <person name="Katoh S."/>
        </authorList>
    </citation>
    <scope>KINETIC PARAMETERS</scope>
    <scope>PHOSPHORYLATION AT SER-213</scope>
    <scope>MUTAGENESIS OF SER-213</scope>
</reference>
<reference key="11">
    <citation type="journal article" date="2011" name="BMC Syst. Biol.">
        <title>Initial characterization of the human central proteome.</title>
        <authorList>
            <person name="Burkard T.R."/>
            <person name="Planyavsky M."/>
            <person name="Kaupe I."/>
            <person name="Breitwieser F.P."/>
            <person name="Buerckstuemmer T."/>
            <person name="Bennett K.L."/>
            <person name="Superti-Furga G."/>
            <person name="Colinge J."/>
        </authorList>
    </citation>
    <scope>IDENTIFICATION BY MASS SPECTROMETRY [LARGE SCALE ANALYSIS]</scope>
</reference>
<reference key="12">
    <citation type="journal article" date="2013" name="J. Proteome Res.">
        <title>Toward a comprehensive characterization of a human cancer cell phosphoproteome.</title>
        <authorList>
            <person name="Zhou H."/>
            <person name="Di Palma S."/>
            <person name="Preisinger C."/>
            <person name="Peng M."/>
            <person name="Polat A.N."/>
            <person name="Heck A.J."/>
            <person name="Mohammed S."/>
        </authorList>
    </citation>
    <scope>PHOSPHORYLATION [LARGE SCALE ANALYSIS] AT SER-103</scope>
    <scope>IDENTIFICATION BY MASS SPECTROMETRY [LARGE SCALE ANALYSIS]</scope>
    <source>
        <tissue>Erythroleukemia</tissue>
    </source>
</reference>
<reference key="13">
    <citation type="journal article" date="2014" name="J. Proteomics">
        <title>An enzyme assisted RP-RPLC approach for in-depth analysis of human liver phosphoproteome.</title>
        <authorList>
            <person name="Bian Y."/>
            <person name="Song C."/>
            <person name="Cheng K."/>
            <person name="Dong M."/>
            <person name="Wang F."/>
            <person name="Huang J."/>
            <person name="Sun D."/>
            <person name="Wang L."/>
            <person name="Ye M."/>
            <person name="Zou H."/>
        </authorList>
    </citation>
    <scope>IDENTIFICATION BY MASS SPECTROMETRY [LARGE SCALE ANALYSIS]</scope>
    <source>
        <tissue>Liver</tissue>
    </source>
</reference>
<reference key="14">
    <citation type="submission" date="2009-02" db="PDB data bank">
        <title>Crystal structure of human sepiapterin reductase.</title>
        <authorList>
            <consortium name="Structural genomics consortium (SGC)"/>
        </authorList>
    </citation>
    <scope>X-RAY CRYSTALLOGRAPHY (2.50 ANGSTROMS) OF 5-261 IN COMPLEX WITH NADP</scope>
</reference>
<reference key="15">
    <citation type="journal article" date="2001" name="Am. J. Hum. Genet.">
        <title>Mutations in the sepiapterin reductase gene cause a novel tetrahydrobiopterin-dependent monoamine-neurotransmitter deficiency without hyperphenylalaninemia.</title>
        <authorList>
            <person name="Bonafe L."/>
            <person name="Thony B."/>
            <person name="Penzien J.M."/>
            <person name="Czarnecki B."/>
            <person name="Blau N."/>
        </authorList>
    </citation>
    <scope>VARIANTS DRDSPRD 119-GLN--LYS-261 DEL AND GLY-150</scope>
    <scope>CHARACTERIZATION OF VARIANT DRDSPRD GLY-150</scope>
</reference>
<reference key="16">
    <citation type="journal article" date="2006" name="Mol. Genet. Metab.">
        <title>Sepiapterin reductase deficiency an autosomal recessive DOPA-responsive dystonia.</title>
        <authorList>
            <person name="Abeling N.G.G.M."/>
            <person name="Duran M."/>
            <person name="Bakker H.D."/>
            <person name="Stroomer L."/>
            <person name="Thoeny B."/>
            <person name="Blau N."/>
            <person name="Booij J."/>
            <person name="Poll-The B.T."/>
        </authorList>
    </citation>
    <scope>VARIANT DRDSPRD LEU-163</scope>
</reference>
<reference key="17">
    <citation type="journal article" date="2006" name="Neurology">
        <title>Dopa-responsive hypersomnia and mixed movement disorder due to sepiapterin reductase deficiency.</title>
        <authorList>
            <person name="Friedman J."/>
            <person name="Hyland K."/>
            <person name="Blau N."/>
            <person name="MacCollin M."/>
        </authorList>
    </citation>
    <scope>VARIANT DRDSPRD GLY-150</scope>
</reference>
<keyword id="KW-0002">3D-structure</keyword>
<keyword id="KW-0007">Acetylation</keyword>
<keyword id="KW-0963">Cytoplasm</keyword>
<keyword id="KW-0225">Disease variant</keyword>
<keyword id="KW-1023">Dystonia</keyword>
<keyword id="KW-0521">NADP</keyword>
<keyword id="KW-0560">Oxidoreductase</keyword>
<keyword id="KW-0597">Phosphoprotein</keyword>
<keyword id="KW-1267">Proteomics identification</keyword>
<keyword id="KW-1185">Reference proteome</keyword>
<organism>
    <name type="scientific">Homo sapiens</name>
    <name type="common">Human</name>
    <dbReference type="NCBI Taxonomy" id="9606"/>
    <lineage>
        <taxon>Eukaryota</taxon>
        <taxon>Metazoa</taxon>
        <taxon>Chordata</taxon>
        <taxon>Craniata</taxon>
        <taxon>Vertebrata</taxon>
        <taxon>Euteleostomi</taxon>
        <taxon>Mammalia</taxon>
        <taxon>Eutheria</taxon>
        <taxon>Euarchontoglires</taxon>
        <taxon>Primates</taxon>
        <taxon>Haplorrhini</taxon>
        <taxon>Catarrhini</taxon>
        <taxon>Hominidae</taxon>
        <taxon>Homo</taxon>
    </lineage>
</organism>
<name>SPRE_HUMAN</name>
<comment type="function">
    <text>Catalyzes the final one or two reductions in tetra-hydrobiopterin biosynthesis to form 5,6,7,8-tetrahydrobiopterin.</text>
</comment>
<comment type="catalytic activity">
    <reaction evidence="3 4">
        <text>L-erythro-7,8-dihydrobiopterin + NADP(+) = L-sepiapterin + NADPH + H(+)</text>
        <dbReference type="Rhea" id="RHEA:18953"/>
        <dbReference type="ChEBI" id="CHEBI:15378"/>
        <dbReference type="ChEBI" id="CHEBI:43029"/>
        <dbReference type="ChEBI" id="CHEBI:57783"/>
        <dbReference type="ChEBI" id="CHEBI:58349"/>
        <dbReference type="ChEBI" id="CHEBI:194527"/>
        <dbReference type="EC" id="1.1.1.153"/>
    </reaction>
    <physiologicalReaction direction="right-to-left" evidence="3 4">
        <dbReference type="Rhea" id="RHEA:18955"/>
    </physiologicalReaction>
</comment>
<comment type="catalytic activity">
    <reaction evidence="10">
        <text>(6R)-L-erythro-5,6,7,8-tetrahydrobiopterin + 2 NADP(+) = 6-pyruvoyl-5,6,7,8-tetrahydropterin + 2 NADPH + 2 H(+)</text>
        <dbReference type="Rhea" id="RHEA:32627"/>
        <dbReference type="ChEBI" id="CHEBI:15378"/>
        <dbReference type="ChEBI" id="CHEBI:57783"/>
        <dbReference type="ChEBI" id="CHEBI:58349"/>
        <dbReference type="ChEBI" id="CHEBI:59560"/>
        <dbReference type="ChEBI" id="CHEBI:136564"/>
        <dbReference type="EC" id="1.1.1.153"/>
    </reaction>
    <physiologicalReaction direction="right-to-left" evidence="10">
        <dbReference type="Rhea" id="RHEA:32629"/>
    </physiologicalReaction>
</comment>
<comment type="biophysicochemical properties">
    <kinetics>
        <KM evidence="3 5">14.3 uM for sepiapterin</KM>
        <KM evidence="3 5">10 uM for NADPH</KM>
        <text evidence="3">kcat is 1.1 sec(-1) with sepiapterin as substrate (PubMed:10350607). kcat is 1.1 sec(-1) with NADPH as substrate (PubMed:10350607).</text>
    </kinetics>
</comment>
<comment type="subunit">
    <text evidence="8">Homodimer.</text>
</comment>
<comment type="subcellular location">
    <subcellularLocation>
        <location>Cytoplasm</location>
    </subcellularLocation>
</comment>
<comment type="PTM">
    <text evidence="5">In vitro phosphorylation of Ser-213 by CaMK2 does not change kinetic parameters.</text>
</comment>
<comment type="disease" evidence="4 6 7">
    <disease id="DI-00411">
        <name>Dystonia, DOPA-responsive, due to sepiapterin reductase deficiency</name>
        <acronym>DRDSPRD</acronym>
        <description>A form of DOPA-responsive dystonia. In the majority of cases, patients manifest progressive psychomotor retardation, dystonia and spasticity. Cognitive anomalies are also often present. The disease is due to severe dopamine and serotonin deficiencies in the central nervous system caused by a defect in BH4 synthesis. Dystonia is defined by the presence of sustained involuntary muscle contractions, often leading to abnormal postures.</description>
        <dbReference type="MIM" id="612716"/>
    </disease>
    <text>The disease is caused by variants affecting the gene represented in this entry.</text>
</comment>
<comment type="similarity">
    <text evidence="9">Belongs to the sepiapterin reductase family.</text>
</comment>
<accession>P35270</accession>
<accession>A8K741</accession>
<accession>D6W5H2</accession>
<accession>Q53GI9</accession>
<accession>Q9UBB1</accession>
<protein>
    <recommendedName>
        <fullName>Sepiapterin reductase</fullName>
        <shortName>SPR</shortName>
        <ecNumber evidence="3 4">1.1.1.153</ecNumber>
    </recommendedName>
</protein>
<gene>
    <name type="primary">SPR</name>
</gene>
<feature type="chain" id="PRO_0000072149" description="Sepiapterin reductase">
    <location>
        <begin position="1"/>
        <end position="261"/>
    </location>
</feature>
<feature type="binding site" evidence="8">
    <location>
        <begin position="14"/>
        <end position="20"/>
    </location>
    <ligand>
        <name>NADP(+)</name>
        <dbReference type="ChEBI" id="CHEBI:58349"/>
    </ligand>
</feature>
<feature type="binding site" evidence="8">
    <location>
        <begin position="42"/>
        <end position="43"/>
    </location>
    <ligand>
        <name>NADP(+)</name>
        <dbReference type="ChEBI" id="CHEBI:58349"/>
    </ligand>
</feature>
<feature type="binding site" evidence="8">
    <location>
        <begin position="69"/>
        <end position="70"/>
    </location>
    <ligand>
        <name>NADP(+)</name>
        <dbReference type="ChEBI" id="CHEBI:58349"/>
    </ligand>
</feature>
<feature type="binding site" evidence="1">
    <location>
        <begin position="157"/>
        <end position="158"/>
    </location>
    <ligand>
        <name>substrate</name>
    </ligand>
</feature>
<feature type="binding site" evidence="1">
    <location>
        <position position="170"/>
    </location>
    <ligand>
        <name>substrate</name>
    </ligand>
</feature>
<feature type="binding site" evidence="1">
    <location>
        <position position="174"/>
    </location>
    <ligand>
        <name>NADP(+)</name>
        <dbReference type="ChEBI" id="CHEBI:58349"/>
    </ligand>
</feature>
<feature type="binding site" evidence="1">
    <location>
        <position position="199"/>
    </location>
    <ligand>
        <name>substrate</name>
    </ligand>
</feature>
<feature type="binding site" evidence="8">
    <location>
        <begin position="201"/>
        <end position="206"/>
    </location>
    <ligand>
        <name>NADP(+)</name>
        <dbReference type="ChEBI" id="CHEBI:58349"/>
    </ligand>
</feature>
<feature type="binding site" evidence="1">
    <location>
        <position position="257"/>
    </location>
    <ligand>
        <name>substrate</name>
    </ligand>
</feature>
<feature type="modified residue" description="N-acetylmethionine" evidence="2">
    <location>
        <position position="1"/>
    </location>
</feature>
<feature type="modified residue" description="Phosphoserine" evidence="2">
    <location>
        <position position="32"/>
    </location>
</feature>
<feature type="modified residue" description="Phosphoserine" evidence="11">
    <location>
        <position position="103"/>
    </location>
</feature>
<feature type="modified residue" description="Phosphoserine; by CaMK2; in vitro" evidence="5">
    <location>
        <position position="213"/>
    </location>
</feature>
<feature type="sequence variant" id="VAR_085775" description="In DRDSPRD." evidence="4">
    <location>
        <begin position="119"/>
        <end position="261"/>
    </location>
</feature>
<feature type="sequence variant" id="VAR_058007" description="In DRDSPRD; loss of sepiapterin reductase activity; dbSNP:rs104893665." evidence="4 7">
    <original>R</original>
    <variation>G</variation>
    <location>
        <position position="150"/>
    </location>
</feature>
<feature type="sequence variant" id="VAR_058008" description="In DRDSPRD; dbSNP:rs104893666." evidence="6">
    <original>P</original>
    <variation>L</variation>
    <location>
        <position position="163"/>
    </location>
</feature>
<feature type="mutagenesis site" description="Abolishes phosphorylation by CaMK2. No effect on kinetic parameters." evidence="5">
    <original>S</original>
    <variation>A</variation>
    <location>
        <position position="213"/>
    </location>
</feature>
<feature type="sequence conflict" description="In Ref. 4; BAD96662." evidence="9" ref="4">
    <original>C</original>
    <variation>R</variation>
    <location>
        <position position="10"/>
    </location>
</feature>
<feature type="turn" evidence="13">
    <location>
        <begin position="2"/>
        <end position="5"/>
    </location>
</feature>
<feature type="strand" evidence="13">
    <location>
        <begin position="7"/>
        <end position="14"/>
    </location>
</feature>
<feature type="helix" evidence="13">
    <location>
        <begin position="18"/>
        <end position="30"/>
    </location>
</feature>
<feature type="strand" evidence="13">
    <location>
        <begin position="36"/>
        <end position="42"/>
    </location>
</feature>
<feature type="helix" evidence="13">
    <location>
        <begin position="44"/>
        <end position="56"/>
    </location>
</feature>
<feature type="helix" evidence="12">
    <location>
        <begin position="57"/>
        <end position="59"/>
    </location>
</feature>
<feature type="strand" evidence="13">
    <location>
        <begin position="62"/>
        <end position="67"/>
    </location>
</feature>
<feature type="helix" evidence="13">
    <location>
        <begin position="73"/>
        <end position="84"/>
    </location>
</feature>
<feature type="strand" evidence="13">
    <location>
        <begin position="94"/>
        <end position="99"/>
    </location>
</feature>
<feature type="helix" evidence="13">
    <location>
        <begin position="111"/>
        <end position="113"/>
    </location>
</feature>
<feature type="helix" evidence="13">
    <location>
        <begin position="117"/>
        <end position="127"/>
    </location>
</feature>
<feature type="helix" evidence="13">
    <location>
        <begin position="129"/>
        <end position="141"/>
    </location>
</feature>
<feature type="strand" evidence="13">
    <location>
        <begin position="149"/>
        <end position="155"/>
    </location>
</feature>
<feature type="helix" evidence="13">
    <location>
        <begin position="158"/>
        <end position="160"/>
    </location>
</feature>
<feature type="helix" evidence="13">
    <location>
        <begin position="168"/>
        <end position="187"/>
    </location>
</feature>
<feature type="strand" evidence="13">
    <location>
        <begin position="191"/>
        <end position="197"/>
    </location>
</feature>
<feature type="strand" evidence="13">
    <location>
        <begin position="200"/>
        <end position="203"/>
    </location>
</feature>
<feature type="helix" evidence="13">
    <location>
        <begin position="204"/>
        <end position="212"/>
    </location>
</feature>
<feature type="helix" evidence="13">
    <location>
        <begin position="216"/>
        <end position="228"/>
    </location>
</feature>
<feature type="helix" evidence="13">
    <location>
        <begin position="234"/>
        <end position="247"/>
    </location>
</feature>
<feature type="strand" evidence="13">
    <location>
        <begin position="254"/>
        <end position="257"/>
    </location>
</feature>
<proteinExistence type="evidence at protein level"/>